<reference key="1">
    <citation type="journal article" date="2002" name="Mol. Microbiol.">
        <title>Genome sequence of Streptococcus agalactiae, a pathogen causing invasive neonatal disease.</title>
        <authorList>
            <person name="Glaser P."/>
            <person name="Rusniok C."/>
            <person name="Buchrieser C."/>
            <person name="Chevalier F."/>
            <person name="Frangeul L."/>
            <person name="Msadek T."/>
            <person name="Zouine M."/>
            <person name="Couve E."/>
            <person name="Lalioui L."/>
            <person name="Poyart C."/>
            <person name="Trieu-Cuot P."/>
            <person name="Kunst F."/>
        </authorList>
    </citation>
    <scope>NUCLEOTIDE SEQUENCE [LARGE SCALE GENOMIC DNA]</scope>
    <source>
        <strain>NEM316</strain>
    </source>
</reference>
<feature type="chain" id="PRO_0000150210" description="Phosphoserine aminotransferase">
    <location>
        <begin position="1"/>
        <end position="363"/>
    </location>
</feature>
<feature type="binding site" evidence="1">
    <location>
        <position position="41"/>
    </location>
    <ligand>
        <name>L-glutamate</name>
        <dbReference type="ChEBI" id="CHEBI:29985"/>
    </ligand>
</feature>
<feature type="binding site" evidence="1">
    <location>
        <begin position="75"/>
        <end position="76"/>
    </location>
    <ligand>
        <name>pyridoxal 5'-phosphate</name>
        <dbReference type="ChEBI" id="CHEBI:597326"/>
    </ligand>
</feature>
<feature type="binding site" evidence="1">
    <location>
        <position position="100"/>
    </location>
    <ligand>
        <name>pyridoxal 5'-phosphate</name>
        <dbReference type="ChEBI" id="CHEBI:597326"/>
    </ligand>
</feature>
<feature type="binding site" evidence="1">
    <location>
        <position position="155"/>
    </location>
    <ligand>
        <name>pyridoxal 5'-phosphate</name>
        <dbReference type="ChEBI" id="CHEBI:597326"/>
    </ligand>
</feature>
<feature type="binding site" evidence="1">
    <location>
        <position position="175"/>
    </location>
    <ligand>
        <name>pyridoxal 5'-phosphate</name>
        <dbReference type="ChEBI" id="CHEBI:597326"/>
    </ligand>
</feature>
<feature type="binding site" evidence="1">
    <location>
        <position position="198"/>
    </location>
    <ligand>
        <name>pyridoxal 5'-phosphate</name>
        <dbReference type="ChEBI" id="CHEBI:597326"/>
    </ligand>
</feature>
<feature type="binding site" evidence="1">
    <location>
        <begin position="239"/>
        <end position="240"/>
    </location>
    <ligand>
        <name>pyridoxal 5'-phosphate</name>
        <dbReference type="ChEBI" id="CHEBI:597326"/>
    </ligand>
</feature>
<feature type="modified residue" description="N6-(pyridoxal phosphate)lysine" evidence="1">
    <location>
        <position position="199"/>
    </location>
</feature>
<comment type="function">
    <text evidence="1">Catalyzes the reversible conversion of 3-phosphohydroxypyruvate to phosphoserine and of 3-hydroxy-2-oxo-4-phosphonooxybutanoate to phosphohydroxythreonine.</text>
</comment>
<comment type="catalytic activity">
    <reaction evidence="1">
        <text>O-phospho-L-serine + 2-oxoglutarate = 3-phosphooxypyruvate + L-glutamate</text>
        <dbReference type="Rhea" id="RHEA:14329"/>
        <dbReference type="ChEBI" id="CHEBI:16810"/>
        <dbReference type="ChEBI" id="CHEBI:18110"/>
        <dbReference type="ChEBI" id="CHEBI:29985"/>
        <dbReference type="ChEBI" id="CHEBI:57524"/>
        <dbReference type="EC" id="2.6.1.52"/>
    </reaction>
</comment>
<comment type="catalytic activity">
    <reaction evidence="1">
        <text>4-(phosphooxy)-L-threonine + 2-oxoglutarate = (R)-3-hydroxy-2-oxo-4-phosphooxybutanoate + L-glutamate</text>
        <dbReference type="Rhea" id="RHEA:16573"/>
        <dbReference type="ChEBI" id="CHEBI:16810"/>
        <dbReference type="ChEBI" id="CHEBI:29985"/>
        <dbReference type="ChEBI" id="CHEBI:58452"/>
        <dbReference type="ChEBI" id="CHEBI:58538"/>
        <dbReference type="EC" id="2.6.1.52"/>
    </reaction>
</comment>
<comment type="cofactor">
    <cofactor evidence="1">
        <name>pyridoxal 5'-phosphate</name>
        <dbReference type="ChEBI" id="CHEBI:597326"/>
    </cofactor>
    <text evidence="1">Binds 1 pyridoxal phosphate per subunit.</text>
</comment>
<comment type="pathway">
    <text evidence="1">Amino-acid biosynthesis; L-serine biosynthesis; L-serine from 3-phospho-D-glycerate: step 2/3.</text>
</comment>
<comment type="subunit">
    <text evidence="1">Homodimer.</text>
</comment>
<comment type="subcellular location">
    <subcellularLocation>
        <location evidence="1">Cytoplasm</location>
    </subcellularLocation>
</comment>
<comment type="similarity">
    <text evidence="1">Belongs to the class-V pyridoxal-phosphate-dependent aminotransferase family. SerC subfamily.</text>
</comment>
<sequence length="363" mass="40531">MTIYNFSAGPAVLPKPVLVKAQSELLNYQGSSMSVLEVSHRSKEFDDIIKGAERYLRDLMGIPDNYKVIFLQGGASLQFSMIPLNIARGRKAYYHVAGSWGKKAYTEAVKLSKTIPFEPILLASSEESVYDYIPEFDEKEIDPEAAYVHVTTNNTIEGTSLYDIPKTNGVPVIADMSSNILAVKYKVEDFAMIYAGAQKNIGPAGVTVVIIREDMINEEPTLSSMLDYKIQSDASSLYNTPPAYSIYIAKLVFEWVKSLGGVDAMEKANREKSGLLYDYIDSSEFYSNPVRDKKSRSLCNIPFITINKDLDEKFVKEATERGFKNIKGHRSVGGMRASLYNAFPKQGVIELIDFMKTFEAENA</sequence>
<gene>
    <name evidence="1" type="primary">serC</name>
    <name type="ordered locus">gbs1621</name>
</gene>
<protein>
    <recommendedName>
        <fullName evidence="1">Phosphoserine aminotransferase</fullName>
        <ecNumber evidence="1">2.6.1.52</ecNumber>
    </recommendedName>
    <alternativeName>
        <fullName evidence="1">Phosphohydroxythreonine aminotransferase</fullName>
        <shortName evidence="1">PSAT</shortName>
    </alternativeName>
</protein>
<name>SERC_STRA3</name>
<proteinExistence type="inferred from homology"/>
<organism>
    <name type="scientific">Streptococcus agalactiae serotype III (strain NEM316)</name>
    <dbReference type="NCBI Taxonomy" id="211110"/>
    <lineage>
        <taxon>Bacteria</taxon>
        <taxon>Bacillati</taxon>
        <taxon>Bacillota</taxon>
        <taxon>Bacilli</taxon>
        <taxon>Lactobacillales</taxon>
        <taxon>Streptococcaceae</taxon>
        <taxon>Streptococcus</taxon>
    </lineage>
</organism>
<evidence type="ECO:0000255" key="1">
    <source>
        <dbReference type="HAMAP-Rule" id="MF_00160"/>
    </source>
</evidence>
<accession>Q8E3Y3</accession>
<keyword id="KW-0028">Amino-acid biosynthesis</keyword>
<keyword id="KW-0032">Aminotransferase</keyword>
<keyword id="KW-0963">Cytoplasm</keyword>
<keyword id="KW-0663">Pyridoxal phosphate</keyword>
<keyword id="KW-0664">Pyridoxine biosynthesis</keyword>
<keyword id="KW-0718">Serine biosynthesis</keyword>
<keyword id="KW-0808">Transferase</keyword>
<dbReference type="EC" id="2.6.1.52" evidence="1"/>
<dbReference type="EMBL" id="AL766852">
    <property type="protein sequence ID" value="CAD47280.1"/>
    <property type="molecule type" value="Genomic_DNA"/>
</dbReference>
<dbReference type="RefSeq" id="WP_000158397.1">
    <property type="nucleotide sequence ID" value="NC_004368.1"/>
</dbReference>
<dbReference type="SMR" id="Q8E3Y3"/>
<dbReference type="KEGG" id="san:serC"/>
<dbReference type="eggNOG" id="COG1932">
    <property type="taxonomic scope" value="Bacteria"/>
</dbReference>
<dbReference type="HOGENOM" id="CLU_034866_0_2_9"/>
<dbReference type="UniPathway" id="UPA00135">
    <property type="reaction ID" value="UER00197"/>
</dbReference>
<dbReference type="Proteomes" id="UP000000823">
    <property type="component" value="Chromosome"/>
</dbReference>
<dbReference type="GO" id="GO:0005737">
    <property type="term" value="C:cytoplasm"/>
    <property type="evidence" value="ECO:0007669"/>
    <property type="project" value="UniProtKB-SubCell"/>
</dbReference>
<dbReference type="GO" id="GO:0004648">
    <property type="term" value="F:O-phospho-L-serine:2-oxoglutarate aminotransferase activity"/>
    <property type="evidence" value="ECO:0007669"/>
    <property type="project" value="UniProtKB-UniRule"/>
</dbReference>
<dbReference type="GO" id="GO:0030170">
    <property type="term" value="F:pyridoxal phosphate binding"/>
    <property type="evidence" value="ECO:0007669"/>
    <property type="project" value="UniProtKB-UniRule"/>
</dbReference>
<dbReference type="GO" id="GO:0006564">
    <property type="term" value="P:L-serine biosynthetic process"/>
    <property type="evidence" value="ECO:0007669"/>
    <property type="project" value="UniProtKB-UniRule"/>
</dbReference>
<dbReference type="GO" id="GO:0008615">
    <property type="term" value="P:pyridoxine biosynthetic process"/>
    <property type="evidence" value="ECO:0007669"/>
    <property type="project" value="UniProtKB-KW"/>
</dbReference>
<dbReference type="FunFam" id="3.40.640.10:FF:000010">
    <property type="entry name" value="Phosphoserine aminotransferase"/>
    <property type="match status" value="1"/>
</dbReference>
<dbReference type="FunFam" id="3.90.1150.10:FF:000006">
    <property type="entry name" value="Phosphoserine aminotransferase"/>
    <property type="match status" value="1"/>
</dbReference>
<dbReference type="Gene3D" id="3.90.1150.10">
    <property type="entry name" value="Aspartate Aminotransferase, domain 1"/>
    <property type="match status" value="1"/>
</dbReference>
<dbReference type="Gene3D" id="3.40.640.10">
    <property type="entry name" value="Type I PLP-dependent aspartate aminotransferase-like (Major domain)"/>
    <property type="match status" value="1"/>
</dbReference>
<dbReference type="HAMAP" id="MF_00160">
    <property type="entry name" value="SerC_aminotrans_5"/>
    <property type="match status" value="1"/>
</dbReference>
<dbReference type="InterPro" id="IPR000192">
    <property type="entry name" value="Aminotrans_V_dom"/>
</dbReference>
<dbReference type="InterPro" id="IPR022278">
    <property type="entry name" value="Pser_aminoTfrase"/>
</dbReference>
<dbReference type="InterPro" id="IPR015424">
    <property type="entry name" value="PyrdxlP-dep_Trfase"/>
</dbReference>
<dbReference type="InterPro" id="IPR015421">
    <property type="entry name" value="PyrdxlP-dep_Trfase_major"/>
</dbReference>
<dbReference type="InterPro" id="IPR015422">
    <property type="entry name" value="PyrdxlP-dep_Trfase_small"/>
</dbReference>
<dbReference type="NCBIfam" id="NF003764">
    <property type="entry name" value="PRK05355.1"/>
    <property type="match status" value="1"/>
</dbReference>
<dbReference type="NCBIfam" id="TIGR01364">
    <property type="entry name" value="serC_1"/>
    <property type="match status" value="1"/>
</dbReference>
<dbReference type="PANTHER" id="PTHR43247">
    <property type="entry name" value="PHOSPHOSERINE AMINOTRANSFERASE"/>
    <property type="match status" value="1"/>
</dbReference>
<dbReference type="PANTHER" id="PTHR43247:SF1">
    <property type="entry name" value="PHOSPHOSERINE AMINOTRANSFERASE"/>
    <property type="match status" value="1"/>
</dbReference>
<dbReference type="Pfam" id="PF00266">
    <property type="entry name" value="Aminotran_5"/>
    <property type="match status" value="1"/>
</dbReference>
<dbReference type="PIRSF" id="PIRSF000525">
    <property type="entry name" value="SerC"/>
    <property type="match status" value="1"/>
</dbReference>
<dbReference type="SUPFAM" id="SSF53383">
    <property type="entry name" value="PLP-dependent transferases"/>
    <property type="match status" value="1"/>
</dbReference>